<reference key="1">
    <citation type="journal article" date="1999" name="Genomics">
        <title>Identification of candidate Drosophila olfactory receptors from genomic DNA sequence.</title>
        <authorList>
            <person name="Gao Q."/>
            <person name="Chess A."/>
        </authorList>
    </citation>
    <scope>NUCLEOTIDE SEQUENCE [GENOMIC DNA]</scope>
</reference>
<reference key="2">
    <citation type="journal article" date="2000" name="Science">
        <title>The genome sequence of Drosophila melanogaster.</title>
        <authorList>
            <person name="Adams M.D."/>
            <person name="Celniker S.E."/>
            <person name="Holt R.A."/>
            <person name="Evans C.A."/>
            <person name="Gocayne J.D."/>
            <person name="Amanatides P.G."/>
            <person name="Scherer S.E."/>
            <person name="Li P.W."/>
            <person name="Hoskins R.A."/>
            <person name="Galle R.F."/>
            <person name="George R.A."/>
            <person name="Lewis S.E."/>
            <person name="Richards S."/>
            <person name="Ashburner M."/>
            <person name="Henderson S.N."/>
            <person name="Sutton G.G."/>
            <person name="Wortman J.R."/>
            <person name="Yandell M.D."/>
            <person name="Zhang Q."/>
            <person name="Chen L.X."/>
            <person name="Brandon R.C."/>
            <person name="Rogers Y.-H.C."/>
            <person name="Blazej R.G."/>
            <person name="Champe M."/>
            <person name="Pfeiffer B.D."/>
            <person name="Wan K.H."/>
            <person name="Doyle C."/>
            <person name="Baxter E.G."/>
            <person name="Helt G."/>
            <person name="Nelson C.R."/>
            <person name="Miklos G.L.G."/>
            <person name="Abril J.F."/>
            <person name="Agbayani A."/>
            <person name="An H.-J."/>
            <person name="Andrews-Pfannkoch C."/>
            <person name="Baldwin D."/>
            <person name="Ballew R.M."/>
            <person name="Basu A."/>
            <person name="Baxendale J."/>
            <person name="Bayraktaroglu L."/>
            <person name="Beasley E.M."/>
            <person name="Beeson K.Y."/>
            <person name="Benos P.V."/>
            <person name="Berman B.P."/>
            <person name="Bhandari D."/>
            <person name="Bolshakov S."/>
            <person name="Borkova D."/>
            <person name="Botchan M.R."/>
            <person name="Bouck J."/>
            <person name="Brokstein P."/>
            <person name="Brottier P."/>
            <person name="Burtis K.C."/>
            <person name="Busam D.A."/>
            <person name="Butler H."/>
            <person name="Cadieu E."/>
            <person name="Center A."/>
            <person name="Chandra I."/>
            <person name="Cherry J.M."/>
            <person name="Cawley S."/>
            <person name="Dahlke C."/>
            <person name="Davenport L.B."/>
            <person name="Davies P."/>
            <person name="de Pablos B."/>
            <person name="Delcher A."/>
            <person name="Deng Z."/>
            <person name="Mays A.D."/>
            <person name="Dew I."/>
            <person name="Dietz S.M."/>
            <person name="Dodson K."/>
            <person name="Doup L.E."/>
            <person name="Downes M."/>
            <person name="Dugan-Rocha S."/>
            <person name="Dunkov B.C."/>
            <person name="Dunn P."/>
            <person name="Durbin K.J."/>
            <person name="Evangelista C.C."/>
            <person name="Ferraz C."/>
            <person name="Ferriera S."/>
            <person name="Fleischmann W."/>
            <person name="Fosler C."/>
            <person name="Gabrielian A.E."/>
            <person name="Garg N.S."/>
            <person name="Gelbart W.M."/>
            <person name="Glasser K."/>
            <person name="Glodek A."/>
            <person name="Gong F."/>
            <person name="Gorrell J.H."/>
            <person name="Gu Z."/>
            <person name="Guan P."/>
            <person name="Harris M."/>
            <person name="Harris N.L."/>
            <person name="Harvey D.A."/>
            <person name="Heiman T.J."/>
            <person name="Hernandez J.R."/>
            <person name="Houck J."/>
            <person name="Hostin D."/>
            <person name="Houston K.A."/>
            <person name="Howland T.J."/>
            <person name="Wei M.-H."/>
            <person name="Ibegwam C."/>
            <person name="Jalali M."/>
            <person name="Kalush F."/>
            <person name="Karpen G.H."/>
            <person name="Ke Z."/>
            <person name="Kennison J.A."/>
            <person name="Ketchum K.A."/>
            <person name="Kimmel B.E."/>
            <person name="Kodira C.D."/>
            <person name="Kraft C.L."/>
            <person name="Kravitz S."/>
            <person name="Kulp D."/>
            <person name="Lai Z."/>
            <person name="Lasko P."/>
            <person name="Lei Y."/>
            <person name="Levitsky A.A."/>
            <person name="Li J.H."/>
            <person name="Li Z."/>
            <person name="Liang Y."/>
            <person name="Lin X."/>
            <person name="Liu X."/>
            <person name="Mattei B."/>
            <person name="McIntosh T.C."/>
            <person name="McLeod M.P."/>
            <person name="McPherson D."/>
            <person name="Merkulov G."/>
            <person name="Milshina N.V."/>
            <person name="Mobarry C."/>
            <person name="Morris J."/>
            <person name="Moshrefi A."/>
            <person name="Mount S.M."/>
            <person name="Moy M."/>
            <person name="Murphy B."/>
            <person name="Murphy L."/>
            <person name="Muzny D.M."/>
            <person name="Nelson D.L."/>
            <person name="Nelson D.R."/>
            <person name="Nelson K.A."/>
            <person name="Nixon K."/>
            <person name="Nusskern D.R."/>
            <person name="Pacleb J.M."/>
            <person name="Palazzolo M."/>
            <person name="Pittman G.S."/>
            <person name="Pan S."/>
            <person name="Pollard J."/>
            <person name="Puri V."/>
            <person name="Reese M.G."/>
            <person name="Reinert K."/>
            <person name="Remington K."/>
            <person name="Saunders R.D.C."/>
            <person name="Scheeler F."/>
            <person name="Shen H."/>
            <person name="Shue B.C."/>
            <person name="Siden-Kiamos I."/>
            <person name="Simpson M."/>
            <person name="Skupski M.P."/>
            <person name="Smith T.J."/>
            <person name="Spier E."/>
            <person name="Spradling A.C."/>
            <person name="Stapleton M."/>
            <person name="Strong R."/>
            <person name="Sun E."/>
            <person name="Svirskas R."/>
            <person name="Tector C."/>
            <person name="Turner R."/>
            <person name="Venter E."/>
            <person name="Wang A.H."/>
            <person name="Wang X."/>
            <person name="Wang Z.-Y."/>
            <person name="Wassarman D.A."/>
            <person name="Weinstock G.M."/>
            <person name="Weissenbach J."/>
            <person name="Williams S.M."/>
            <person name="Woodage T."/>
            <person name="Worley K.C."/>
            <person name="Wu D."/>
            <person name="Yang S."/>
            <person name="Yao Q.A."/>
            <person name="Ye J."/>
            <person name="Yeh R.-F."/>
            <person name="Zaveri J.S."/>
            <person name="Zhan M."/>
            <person name="Zhang G."/>
            <person name="Zhao Q."/>
            <person name="Zheng L."/>
            <person name="Zheng X.H."/>
            <person name="Zhong F.N."/>
            <person name="Zhong W."/>
            <person name="Zhou X."/>
            <person name="Zhu S.C."/>
            <person name="Zhu X."/>
            <person name="Smith H.O."/>
            <person name="Gibbs R.A."/>
            <person name="Myers E.W."/>
            <person name="Rubin G.M."/>
            <person name="Venter J.C."/>
        </authorList>
    </citation>
    <scope>NUCLEOTIDE SEQUENCE [LARGE SCALE GENOMIC DNA]</scope>
    <source>
        <strain>Berkeley</strain>
    </source>
</reference>
<reference key="3">
    <citation type="journal article" date="2002" name="Genome Biol.">
        <title>Annotation of the Drosophila melanogaster euchromatic genome: a systematic review.</title>
        <authorList>
            <person name="Misra S."/>
            <person name="Crosby M.A."/>
            <person name="Mungall C.J."/>
            <person name="Matthews B.B."/>
            <person name="Campbell K.S."/>
            <person name="Hradecky P."/>
            <person name="Huang Y."/>
            <person name="Kaminker J.S."/>
            <person name="Millburn G.H."/>
            <person name="Prochnik S.E."/>
            <person name="Smith C.D."/>
            <person name="Tupy J.L."/>
            <person name="Whitfield E.J."/>
            <person name="Bayraktaroglu L."/>
            <person name="Berman B.P."/>
            <person name="Bettencourt B.R."/>
            <person name="Celniker S.E."/>
            <person name="de Grey A.D.N.J."/>
            <person name="Drysdale R.A."/>
            <person name="Harris N.L."/>
            <person name="Richter J."/>
            <person name="Russo S."/>
            <person name="Schroeder A.J."/>
            <person name="Shu S.Q."/>
            <person name="Stapleton M."/>
            <person name="Yamada C."/>
            <person name="Ashburner M."/>
            <person name="Gelbart W.M."/>
            <person name="Rubin G.M."/>
            <person name="Lewis S.E."/>
        </authorList>
    </citation>
    <scope>GENOME REANNOTATION</scope>
    <source>
        <strain>Berkeley</strain>
    </source>
</reference>
<reference key="4">
    <citation type="journal article" date="1999" name="Neuron">
        <title>A novel family of divergent seven-transmembrane proteins: candidate odorant receptors in Drosophila.</title>
        <authorList>
            <person name="Clyne P.J."/>
            <person name="Warr C.G."/>
            <person name="Freeman M.R."/>
            <person name="Lessing D."/>
            <person name="Kim J."/>
            <person name="Carlson J.R."/>
        </authorList>
    </citation>
    <scope>IDENTIFICATION</scope>
    <scope>TISSUE SPECIFICITY</scope>
</reference>
<reference key="5">
    <citation type="journal article" date="1999" name="Cell">
        <title>A spatial map of olfactory receptor expression in the Drosophila antenna.</title>
        <authorList>
            <person name="Vosshall L.B."/>
            <person name="Amrein H."/>
            <person name="Morozov P.S."/>
            <person name="Rzhetsky A."/>
            <person name="Axel R."/>
        </authorList>
    </citation>
    <scope>IDENTIFICATION</scope>
    <scope>TISSUE SPECIFICITY</scope>
    <source>
        <strain>Oregon-R</strain>
        <tissue>Antenna</tissue>
    </source>
</reference>
<reference key="6">
    <citation type="journal article" date="2000" name="Cell">
        <title>An olfactory sensory map in the fly brain.</title>
        <authorList>
            <person name="Vosshall L.B."/>
            <person name="Wong A.M."/>
            <person name="Axel R."/>
        </authorList>
    </citation>
    <scope>TISSUE SPECIFICITY</scope>
</reference>
<organism>
    <name type="scientific">Drosophila melanogaster</name>
    <name type="common">Fruit fly</name>
    <dbReference type="NCBI Taxonomy" id="7227"/>
    <lineage>
        <taxon>Eukaryota</taxon>
        <taxon>Metazoa</taxon>
        <taxon>Ecdysozoa</taxon>
        <taxon>Arthropoda</taxon>
        <taxon>Hexapoda</taxon>
        <taxon>Insecta</taxon>
        <taxon>Pterygota</taxon>
        <taxon>Neoptera</taxon>
        <taxon>Endopterygota</taxon>
        <taxon>Diptera</taxon>
        <taxon>Brachycera</taxon>
        <taxon>Muscomorpha</taxon>
        <taxon>Ephydroidea</taxon>
        <taxon>Drosophilidae</taxon>
        <taxon>Drosophila</taxon>
        <taxon>Sophophora</taxon>
    </lineage>
</organism>
<proteinExistence type="evidence at transcript level"/>
<protein>
    <recommendedName>
        <fullName>Odorant receptor 33a</fullName>
    </recommendedName>
</protein>
<evidence type="ECO:0000250" key="1"/>
<evidence type="ECO:0000255" key="2"/>
<evidence type="ECO:0000269" key="3">
    <source>
    </source>
</evidence>
<evidence type="ECO:0000269" key="4">
    <source>
    </source>
</evidence>
<evidence type="ECO:0000269" key="5">
    <source>
    </source>
</evidence>
<evidence type="ECO:0000305" key="6"/>
<comment type="function">
    <text evidence="1">Odorant receptor which mediates acceptance or avoidance behavior, depending on its substrates. The odorant receptor repertoire encodes a large collection of odor stimuli that vary widely in identity, intensity, and duration. May form a complex with Orco to form odorant-sensing units, providing sensitive and prolonged odorant signaling and calcium permeability (By similarity).</text>
</comment>
<comment type="subunit">
    <text evidence="1">Interacts with Orco. Complexes exist early in the endomembrane system in olfactory sensory neurons (OSNs), coupling these complexes to the conserved ciliary trafficking pathway (By similarity).</text>
</comment>
<comment type="subcellular location">
    <subcellularLocation>
        <location evidence="1">Cell membrane</location>
        <topology evidence="1">Multi-pass membrane protein</topology>
    </subcellularLocation>
</comment>
<comment type="tissue specificity">
    <text evidence="3 4 5">Expressed in 1-2 cells on the distal edge of the antenna but not the maxillary palp.</text>
</comment>
<comment type="miscellaneous">
    <text>The atypical heteromeric and topological design of the odorant receptors appears to be an insect-specific solution for odor recognition, making the OR/Orco complex an attractive target for the development of highly selective insect repellents to disrupt olfactory-mediated host-seeking behaviors of insect disease vectors. Odor-evoked OR currents are independent of known G-protein-coupled second messenger pathways.</text>
</comment>
<comment type="similarity">
    <text evidence="6">Belongs to the insect chemoreceptor superfamily. Heteromeric odorant receptor channel (TC 1.A.69) family. Or2a subfamily.</text>
</comment>
<sequence>MDSRRKVRSENLYKTYWLYWRLLGVEGDYPFRRLVDFTITSFITILFPVHLILGMYKKPQIQVFRSLHFTSECLFCSYKFFCFRWKLKEIKTIEGLLQDLDSRVESEEERNYFNQNPSRVARMLSKSYLVAAISAIITATVAGLFSTGRNLMYLGWFPYDFQATAAIYWISFSYQAIGSSLLILENLANDSYPPITFCVVSGHVRLLIMRLSRIGHDVKLSSSENTRKLIEGIQDHRKLMKIIRLLRSTLHLSQLGQFLSSGINISITLINILFFAENNFAMLYYAVFFAAMLIELFPSCYYGILMTMEFDKLPYAIFSSNWLKMDKRYNRSLIILMQLTLVPVNIKAGGIVGIDMSAFFATVRMAYSFYTLALSFRV</sequence>
<feature type="chain" id="PRO_0000174238" description="Odorant receptor 33a">
    <location>
        <begin position="1"/>
        <end position="378"/>
    </location>
</feature>
<feature type="topological domain" description="Cytoplasmic" evidence="2">
    <location>
        <begin position="1"/>
        <end position="33"/>
    </location>
</feature>
<feature type="transmembrane region" description="Helical; Name=1" evidence="2">
    <location>
        <begin position="34"/>
        <end position="54"/>
    </location>
</feature>
<feature type="topological domain" description="Extracellular" evidence="2">
    <location>
        <begin position="55"/>
        <end position="62"/>
    </location>
</feature>
<feature type="transmembrane region" description="Helical; Name=2" evidence="2">
    <location>
        <begin position="63"/>
        <end position="83"/>
    </location>
</feature>
<feature type="topological domain" description="Cytoplasmic" evidence="2">
    <location>
        <begin position="84"/>
        <end position="127"/>
    </location>
</feature>
<feature type="transmembrane region" description="Helical; Name=3" evidence="2">
    <location>
        <begin position="128"/>
        <end position="148"/>
    </location>
</feature>
<feature type="topological domain" description="Extracellular" evidence="2">
    <location>
        <begin position="149"/>
        <end position="163"/>
    </location>
</feature>
<feature type="transmembrane region" description="Helical; Name=4" evidence="2">
    <location>
        <begin position="164"/>
        <end position="184"/>
    </location>
</feature>
<feature type="topological domain" description="Cytoplasmic" evidence="2">
    <location>
        <begin position="185"/>
        <end position="254"/>
    </location>
</feature>
<feature type="transmembrane region" description="Helical; Name=5" evidence="2">
    <location>
        <begin position="255"/>
        <end position="275"/>
    </location>
</feature>
<feature type="topological domain" description="Extracellular" evidence="2">
    <location>
        <begin position="276"/>
        <end position="285"/>
    </location>
</feature>
<feature type="transmembrane region" description="Helical; Name=6" evidence="2">
    <location>
        <begin position="286"/>
        <end position="306"/>
    </location>
</feature>
<feature type="topological domain" description="Cytoplasmic" evidence="2">
    <location>
        <begin position="307"/>
        <end position="355"/>
    </location>
</feature>
<feature type="transmembrane region" description="Helical; Name=7" evidence="2">
    <location>
        <begin position="356"/>
        <end position="376"/>
    </location>
</feature>
<feature type="topological domain" description="Extracellular" evidence="2">
    <location>
        <begin position="377"/>
        <end position="378"/>
    </location>
</feature>
<accession>P81914</accession>
<name>OR33A_DROME</name>
<keyword id="KW-1003">Cell membrane</keyword>
<keyword id="KW-0472">Membrane</keyword>
<keyword id="KW-0552">Olfaction</keyword>
<keyword id="KW-0675">Receptor</keyword>
<keyword id="KW-1185">Reference proteome</keyword>
<keyword id="KW-0716">Sensory transduction</keyword>
<keyword id="KW-0807">Transducer</keyword>
<keyword id="KW-0812">Transmembrane</keyword>
<keyword id="KW-1133">Transmembrane helix</keyword>
<dbReference type="EMBL" id="AE014134">
    <property type="protein sequence ID" value="AAF53131.1"/>
    <property type="molecule type" value="Genomic_DNA"/>
</dbReference>
<dbReference type="RefSeq" id="NP_523553.1">
    <property type="nucleotide sequence ID" value="NM_078829.1"/>
</dbReference>
<dbReference type="SMR" id="P81914"/>
<dbReference type="BioGRID" id="60654">
    <property type="interactions" value="2"/>
</dbReference>
<dbReference type="DIP" id="DIP-22508N"/>
<dbReference type="FunCoup" id="P81914">
    <property type="interactions" value="36"/>
</dbReference>
<dbReference type="STRING" id="7227.FBpp0079862"/>
<dbReference type="PaxDb" id="7227-FBpp0079862"/>
<dbReference type="EnsemblMetazoa" id="FBtr0080278">
    <property type="protein sequence ID" value="FBpp0079862"/>
    <property type="gene ID" value="FBgn0026392"/>
</dbReference>
<dbReference type="GeneID" id="34601"/>
<dbReference type="KEGG" id="dme:Dmel_CG16960"/>
<dbReference type="AGR" id="FB:FBgn0026392"/>
<dbReference type="CTD" id="34601"/>
<dbReference type="FlyBase" id="FBgn0026392">
    <property type="gene designation" value="Or33a"/>
</dbReference>
<dbReference type="VEuPathDB" id="VectorBase:FBgn0026392"/>
<dbReference type="eggNOG" id="ENOG502TBPZ">
    <property type="taxonomic scope" value="Eukaryota"/>
</dbReference>
<dbReference type="GeneTree" id="ENSGT00540000073151"/>
<dbReference type="HOGENOM" id="CLU_033399_8_1_1"/>
<dbReference type="InParanoid" id="P81914"/>
<dbReference type="OMA" id="MANDSYP"/>
<dbReference type="OrthoDB" id="5846619at2759"/>
<dbReference type="PhylomeDB" id="P81914"/>
<dbReference type="BioGRID-ORCS" id="34601">
    <property type="hits" value="0 hits in 1 CRISPR screen"/>
</dbReference>
<dbReference type="GenomeRNAi" id="34601"/>
<dbReference type="PRO" id="PR:P81914"/>
<dbReference type="Proteomes" id="UP000000803">
    <property type="component" value="Chromosome 2L"/>
</dbReference>
<dbReference type="Bgee" id="FBgn0026392">
    <property type="expression patterns" value="Expressed in antenna"/>
</dbReference>
<dbReference type="ExpressionAtlas" id="P81914">
    <property type="expression patterns" value="baseline and differential"/>
</dbReference>
<dbReference type="GO" id="GO:0032590">
    <property type="term" value="C:dendrite membrane"/>
    <property type="evidence" value="ECO:0000250"/>
    <property type="project" value="FlyBase"/>
</dbReference>
<dbReference type="GO" id="GO:0016020">
    <property type="term" value="C:membrane"/>
    <property type="evidence" value="ECO:0000303"/>
    <property type="project" value="UniProtKB"/>
</dbReference>
<dbReference type="GO" id="GO:0005886">
    <property type="term" value="C:plasma membrane"/>
    <property type="evidence" value="ECO:0000255"/>
    <property type="project" value="FlyBase"/>
</dbReference>
<dbReference type="GO" id="GO:0170020">
    <property type="term" value="F:ionotropic olfactory receptor activity"/>
    <property type="evidence" value="ECO:0000314"/>
    <property type="project" value="FlyBase"/>
</dbReference>
<dbReference type="GO" id="GO:0005549">
    <property type="term" value="F:odorant binding"/>
    <property type="evidence" value="ECO:0000250"/>
    <property type="project" value="FlyBase"/>
</dbReference>
<dbReference type="GO" id="GO:0004984">
    <property type="term" value="F:olfactory receptor activity"/>
    <property type="evidence" value="ECO:0000318"/>
    <property type="project" value="GO_Central"/>
</dbReference>
<dbReference type="GO" id="GO:0050911">
    <property type="term" value="P:detection of chemical stimulus involved in sensory perception of smell"/>
    <property type="evidence" value="ECO:0000318"/>
    <property type="project" value="GO_Central"/>
</dbReference>
<dbReference type="GO" id="GO:0007608">
    <property type="term" value="P:sensory perception of smell"/>
    <property type="evidence" value="ECO:0000270"/>
    <property type="project" value="FlyBase"/>
</dbReference>
<dbReference type="GO" id="GO:0007165">
    <property type="term" value="P:signal transduction"/>
    <property type="evidence" value="ECO:0007669"/>
    <property type="project" value="UniProtKB-KW"/>
</dbReference>
<dbReference type="InterPro" id="IPR004117">
    <property type="entry name" value="7tm6_olfct_rcpt"/>
</dbReference>
<dbReference type="PANTHER" id="PTHR21137">
    <property type="entry name" value="ODORANT RECEPTOR"/>
    <property type="match status" value="1"/>
</dbReference>
<dbReference type="PANTHER" id="PTHR21137:SF35">
    <property type="entry name" value="ODORANT RECEPTOR 19A-RELATED"/>
    <property type="match status" value="1"/>
</dbReference>
<dbReference type="Pfam" id="PF02949">
    <property type="entry name" value="7tm_6"/>
    <property type="match status" value="1"/>
</dbReference>
<gene>
    <name type="primary">Or33a</name>
    <name type="synonym">AN3</name>
    <name type="synonym">DOR33B.1</name>
    <name type="synonym">dor73</name>
    <name type="synonym">Or33B.1</name>
    <name type="ORF">CG16960</name>
</gene>